<name>DNAA_CUPNH</name>
<organism>
    <name type="scientific">Cupriavidus necator (strain ATCC 17699 / DSM 428 / KCTC 22496 / NCIMB 10442 / H16 / Stanier 337)</name>
    <name type="common">Ralstonia eutropha</name>
    <dbReference type="NCBI Taxonomy" id="381666"/>
    <lineage>
        <taxon>Bacteria</taxon>
        <taxon>Pseudomonadati</taxon>
        <taxon>Pseudomonadota</taxon>
        <taxon>Betaproteobacteria</taxon>
        <taxon>Burkholderiales</taxon>
        <taxon>Burkholderiaceae</taxon>
        <taxon>Cupriavidus</taxon>
    </lineage>
</organism>
<comment type="function">
    <text evidence="1">Plays an essential role in the initiation and regulation of chromosomal replication. ATP-DnaA binds to the origin of replication (oriC) to initiate formation of the DNA replication initiation complex once per cell cycle. Binds the DnaA box (a 9 base pair repeat at the origin) and separates the double-stranded (ds)DNA. Forms a right-handed helical filament on oriC DNA; dsDNA binds to the exterior of the filament while single-stranded (ss)DNA is stabiized in the filament's interior. The ATP-DnaA-oriC complex binds and stabilizes one strand of the AT-rich DNA unwinding element (DUE), permitting loading of DNA polymerase. After initiation quickly degrades to an ADP-DnaA complex that is not apt for DNA replication. Binds acidic phospholipids.</text>
</comment>
<comment type="subunit">
    <text evidence="1">Oligomerizes as a right-handed, spiral filament on DNA at oriC.</text>
</comment>
<comment type="subcellular location">
    <subcellularLocation>
        <location evidence="1">Cytoplasm</location>
    </subcellularLocation>
</comment>
<comment type="domain">
    <text evidence="1">Domain I is involved in oligomerization and binding regulators, domain II is flexibile and of varying length in different bacteria, domain III forms the AAA+ region, while domain IV binds dsDNA.</text>
</comment>
<comment type="similarity">
    <text evidence="1">Belongs to the DnaA family.</text>
</comment>
<protein>
    <recommendedName>
        <fullName evidence="1">Chromosomal replication initiator protein DnaA</fullName>
    </recommendedName>
</protein>
<gene>
    <name evidence="1" type="primary">dnaA</name>
    <name type="ordered locus">H16_A0001</name>
</gene>
<evidence type="ECO:0000255" key="1">
    <source>
        <dbReference type="HAMAP-Rule" id="MF_00377"/>
    </source>
</evidence>
<evidence type="ECO:0000256" key="2">
    <source>
        <dbReference type="SAM" id="MobiDB-lite"/>
    </source>
</evidence>
<accession>Q0KFR8</accession>
<feature type="chain" id="PRO_1000048699" description="Chromosomal replication initiator protein DnaA">
    <location>
        <begin position="1"/>
        <end position="588"/>
    </location>
</feature>
<feature type="region of interest" description="Domain I, interacts with DnaA modulators" evidence="1">
    <location>
        <begin position="1"/>
        <end position="73"/>
    </location>
</feature>
<feature type="region of interest" description="Domain II" evidence="1">
    <location>
        <begin position="73"/>
        <end position="251"/>
    </location>
</feature>
<feature type="region of interest" description="Disordered" evidence="2">
    <location>
        <begin position="104"/>
        <end position="141"/>
    </location>
</feature>
<feature type="region of interest" description="Disordered" evidence="2">
    <location>
        <begin position="154"/>
        <end position="198"/>
    </location>
</feature>
<feature type="region of interest" description="Disordered" evidence="2">
    <location>
        <begin position="212"/>
        <end position="247"/>
    </location>
</feature>
<feature type="region of interest" description="Domain III, AAA+ region" evidence="1">
    <location>
        <begin position="252"/>
        <end position="468"/>
    </location>
</feature>
<feature type="region of interest" description="Domain IV, binds dsDNA" evidence="1">
    <location>
        <begin position="469"/>
        <end position="588"/>
    </location>
</feature>
<feature type="compositionally biased region" description="Low complexity" evidence="2">
    <location>
        <begin position="118"/>
        <end position="140"/>
    </location>
</feature>
<feature type="compositionally biased region" description="Low complexity" evidence="2">
    <location>
        <begin position="155"/>
        <end position="176"/>
    </location>
</feature>
<feature type="compositionally biased region" description="Low complexity" evidence="2">
    <location>
        <begin position="183"/>
        <end position="196"/>
    </location>
</feature>
<feature type="binding site" evidence="1">
    <location>
        <position position="296"/>
    </location>
    <ligand>
        <name>ATP</name>
        <dbReference type="ChEBI" id="CHEBI:30616"/>
    </ligand>
</feature>
<feature type="binding site" evidence="1">
    <location>
        <position position="298"/>
    </location>
    <ligand>
        <name>ATP</name>
        <dbReference type="ChEBI" id="CHEBI:30616"/>
    </ligand>
</feature>
<feature type="binding site" evidence="1">
    <location>
        <position position="299"/>
    </location>
    <ligand>
        <name>ATP</name>
        <dbReference type="ChEBI" id="CHEBI:30616"/>
    </ligand>
</feature>
<feature type="binding site" evidence="1">
    <location>
        <position position="300"/>
    </location>
    <ligand>
        <name>ATP</name>
        <dbReference type="ChEBI" id="CHEBI:30616"/>
    </ligand>
</feature>
<sequence length="588" mass="64647">MQDFWQAAAAQLERELTPQQFKTWIKPLAPVAFDEETHALRIAAPNRFKLDWVKSQFSGRITALACEYWEAQVSVQFVLDPAASGRAAAYMQPAQPGMGPGGMDGHAAPGTGMGGYPGAQPMGGQAMGQPPFAMPGQQPGYGYGEPVSAAGYGMGQPPYGNPGNPGNPAGMPSAAPVPAGARGQPHPGQHGHQPHGADMGEIDVVQMDPAEASARSYRAPPQQPQQQPHQQMGGATPMPGHQPSDTVHERSRLNPILTFDNFVTGKANQLARAAAIQVANNPGKSYNPLYLYGGVGLGKTHLIHAIGNFMLLENPRARIRYIHAEQYVSDVVKAYQRKAFDEFKRYYHSLDLLLIDDIQFFSGKNRTQEEFFYAFEALIANRAQVIITSDTYPKEISGIDDRLISRFDSGLTVAIEPPELEMRVAILMKKAAAENVNVPEEVAFFVAKHLRSNVRELEGALRKILAFSNFHGKDITIEVTREALKDLLTVQNRQISVENIQKTCADFYNIKVADMYSKKRPANIARPRQIAMYLAKELTQKSLPEIGELFGGRDHTTVLHAVRKIADERSKDAQLNHELHVLEQTLKG</sequence>
<proteinExistence type="inferred from homology"/>
<dbReference type="EMBL" id="AM260479">
    <property type="protein sequence ID" value="CAJ91153.1"/>
    <property type="molecule type" value="Genomic_DNA"/>
</dbReference>
<dbReference type="RefSeq" id="WP_011614275.1">
    <property type="nucleotide sequence ID" value="NC_008313.1"/>
</dbReference>
<dbReference type="SMR" id="Q0KFR8"/>
<dbReference type="STRING" id="381666.H16_A0001"/>
<dbReference type="KEGG" id="reh:H16_A0001"/>
<dbReference type="PATRIC" id="fig|381666.6.peg.359"/>
<dbReference type="eggNOG" id="COG0593">
    <property type="taxonomic scope" value="Bacteria"/>
</dbReference>
<dbReference type="HOGENOM" id="CLU_026910_0_1_4"/>
<dbReference type="OrthoDB" id="9807019at2"/>
<dbReference type="Proteomes" id="UP000008210">
    <property type="component" value="Chromosome 1"/>
</dbReference>
<dbReference type="GO" id="GO:0005737">
    <property type="term" value="C:cytoplasm"/>
    <property type="evidence" value="ECO:0007669"/>
    <property type="project" value="UniProtKB-SubCell"/>
</dbReference>
<dbReference type="GO" id="GO:0005886">
    <property type="term" value="C:plasma membrane"/>
    <property type="evidence" value="ECO:0007669"/>
    <property type="project" value="TreeGrafter"/>
</dbReference>
<dbReference type="GO" id="GO:0005524">
    <property type="term" value="F:ATP binding"/>
    <property type="evidence" value="ECO:0007669"/>
    <property type="project" value="UniProtKB-UniRule"/>
</dbReference>
<dbReference type="GO" id="GO:0016887">
    <property type="term" value="F:ATP hydrolysis activity"/>
    <property type="evidence" value="ECO:0007669"/>
    <property type="project" value="InterPro"/>
</dbReference>
<dbReference type="GO" id="GO:0003688">
    <property type="term" value="F:DNA replication origin binding"/>
    <property type="evidence" value="ECO:0007669"/>
    <property type="project" value="UniProtKB-UniRule"/>
</dbReference>
<dbReference type="GO" id="GO:0008289">
    <property type="term" value="F:lipid binding"/>
    <property type="evidence" value="ECO:0007669"/>
    <property type="project" value="UniProtKB-KW"/>
</dbReference>
<dbReference type="GO" id="GO:0006270">
    <property type="term" value="P:DNA replication initiation"/>
    <property type="evidence" value="ECO:0007669"/>
    <property type="project" value="UniProtKB-UniRule"/>
</dbReference>
<dbReference type="GO" id="GO:0006275">
    <property type="term" value="P:regulation of DNA replication"/>
    <property type="evidence" value="ECO:0007669"/>
    <property type="project" value="UniProtKB-UniRule"/>
</dbReference>
<dbReference type="CDD" id="cd00009">
    <property type="entry name" value="AAA"/>
    <property type="match status" value="1"/>
</dbReference>
<dbReference type="CDD" id="cd06571">
    <property type="entry name" value="Bac_DnaA_C"/>
    <property type="match status" value="1"/>
</dbReference>
<dbReference type="FunFam" id="1.10.8.60:FF:000003">
    <property type="entry name" value="Chromosomal replication initiator protein DnaA"/>
    <property type="match status" value="1"/>
</dbReference>
<dbReference type="FunFam" id="3.40.50.300:FF:000668">
    <property type="entry name" value="Chromosomal replication initiator protein DnaA"/>
    <property type="match status" value="1"/>
</dbReference>
<dbReference type="Gene3D" id="1.10.1750.10">
    <property type="match status" value="1"/>
</dbReference>
<dbReference type="Gene3D" id="1.10.8.60">
    <property type="match status" value="1"/>
</dbReference>
<dbReference type="Gene3D" id="3.30.300.180">
    <property type="match status" value="1"/>
</dbReference>
<dbReference type="Gene3D" id="3.40.50.300">
    <property type="entry name" value="P-loop containing nucleotide triphosphate hydrolases"/>
    <property type="match status" value="1"/>
</dbReference>
<dbReference type="HAMAP" id="MF_00377">
    <property type="entry name" value="DnaA_bact"/>
    <property type="match status" value="1"/>
</dbReference>
<dbReference type="InterPro" id="IPR003593">
    <property type="entry name" value="AAA+_ATPase"/>
</dbReference>
<dbReference type="InterPro" id="IPR001957">
    <property type="entry name" value="Chromosome_initiator_DnaA"/>
</dbReference>
<dbReference type="InterPro" id="IPR020591">
    <property type="entry name" value="Chromosome_initiator_DnaA-like"/>
</dbReference>
<dbReference type="InterPro" id="IPR018312">
    <property type="entry name" value="Chromosome_initiator_DnaA_CS"/>
</dbReference>
<dbReference type="InterPro" id="IPR013159">
    <property type="entry name" value="DnaA_C"/>
</dbReference>
<dbReference type="InterPro" id="IPR013317">
    <property type="entry name" value="DnaA_dom"/>
</dbReference>
<dbReference type="InterPro" id="IPR024633">
    <property type="entry name" value="DnaA_N_dom"/>
</dbReference>
<dbReference type="InterPro" id="IPR038454">
    <property type="entry name" value="DnaA_N_sf"/>
</dbReference>
<dbReference type="InterPro" id="IPR027417">
    <property type="entry name" value="P-loop_NTPase"/>
</dbReference>
<dbReference type="InterPro" id="IPR010921">
    <property type="entry name" value="Trp_repressor/repl_initiator"/>
</dbReference>
<dbReference type="NCBIfam" id="TIGR00362">
    <property type="entry name" value="DnaA"/>
    <property type="match status" value="1"/>
</dbReference>
<dbReference type="PANTHER" id="PTHR30050">
    <property type="entry name" value="CHROMOSOMAL REPLICATION INITIATOR PROTEIN DNAA"/>
    <property type="match status" value="1"/>
</dbReference>
<dbReference type="PANTHER" id="PTHR30050:SF2">
    <property type="entry name" value="CHROMOSOMAL REPLICATION INITIATOR PROTEIN DNAA"/>
    <property type="match status" value="1"/>
</dbReference>
<dbReference type="Pfam" id="PF00308">
    <property type="entry name" value="Bac_DnaA"/>
    <property type="match status" value="1"/>
</dbReference>
<dbReference type="Pfam" id="PF08299">
    <property type="entry name" value="Bac_DnaA_C"/>
    <property type="match status" value="1"/>
</dbReference>
<dbReference type="Pfam" id="PF11638">
    <property type="entry name" value="DnaA_N"/>
    <property type="match status" value="1"/>
</dbReference>
<dbReference type="PRINTS" id="PR00051">
    <property type="entry name" value="DNAA"/>
</dbReference>
<dbReference type="SMART" id="SM00382">
    <property type="entry name" value="AAA"/>
    <property type="match status" value="1"/>
</dbReference>
<dbReference type="SMART" id="SM00760">
    <property type="entry name" value="Bac_DnaA_C"/>
    <property type="match status" value="1"/>
</dbReference>
<dbReference type="SUPFAM" id="SSF52540">
    <property type="entry name" value="P-loop containing nucleoside triphosphate hydrolases"/>
    <property type="match status" value="1"/>
</dbReference>
<dbReference type="SUPFAM" id="SSF48295">
    <property type="entry name" value="TrpR-like"/>
    <property type="match status" value="1"/>
</dbReference>
<dbReference type="PROSITE" id="PS01008">
    <property type="entry name" value="DNAA"/>
    <property type="match status" value="1"/>
</dbReference>
<reference key="1">
    <citation type="journal article" date="2006" name="Nat. Biotechnol.">
        <title>Genome sequence of the bioplastic-producing 'Knallgas' bacterium Ralstonia eutropha H16.</title>
        <authorList>
            <person name="Pohlmann A."/>
            <person name="Fricke W.F."/>
            <person name="Reinecke F."/>
            <person name="Kusian B."/>
            <person name="Liesegang H."/>
            <person name="Cramm R."/>
            <person name="Eitinger T."/>
            <person name="Ewering C."/>
            <person name="Poetter M."/>
            <person name="Schwartz E."/>
            <person name="Strittmatter A."/>
            <person name="Voss I."/>
            <person name="Gottschalk G."/>
            <person name="Steinbuechel A."/>
            <person name="Friedrich B."/>
            <person name="Bowien B."/>
        </authorList>
    </citation>
    <scope>NUCLEOTIDE SEQUENCE [LARGE SCALE GENOMIC DNA]</scope>
    <source>
        <strain>ATCC 17699 / DSM 428 / KCTC 22496 / NCIMB 10442 / H16 / Stanier 337</strain>
    </source>
</reference>
<keyword id="KW-0067">ATP-binding</keyword>
<keyword id="KW-0963">Cytoplasm</keyword>
<keyword id="KW-0235">DNA replication</keyword>
<keyword id="KW-0238">DNA-binding</keyword>
<keyword id="KW-0446">Lipid-binding</keyword>
<keyword id="KW-0547">Nucleotide-binding</keyword>
<keyword id="KW-1185">Reference proteome</keyword>